<sequence>MAIFSVYVVNKAGGLIYQWDSYSPRAEAEKTFSYPLDLLLKLHDERVLVAFGQRDGIRVGHAVLAINGMDVNGKYTADGKEVLEYLGNPANYPVSIRFGRPRLTSNEKLMLASMFHSLFAIGSQLSPEQGSSGIEMLETDTFKLHCFQTLTGIKFVVLADPRQAGIDSLLRKIYEIYSDFALKNPFYSLEMPIRCELFDQNLKLALEVAEKAGTFGPGS</sequence>
<feature type="chain" id="PRO_0000211570" description="Trafficking protein particle complex subunit 4">
    <location>
        <begin position="1"/>
        <end position="219"/>
    </location>
</feature>
<protein>
    <recommendedName>
        <fullName evidence="4">Trafficking protein particle complex subunit 4</fullName>
    </recommendedName>
    <alternativeName>
        <fullName evidence="3">Synbindin</fullName>
    </alternativeName>
    <alternativeName>
        <fullName>TRS23 homolog</fullName>
    </alternativeName>
</protein>
<organism>
    <name type="scientific">Mus musculus</name>
    <name type="common">Mouse</name>
    <dbReference type="NCBI Taxonomy" id="10090"/>
    <lineage>
        <taxon>Eukaryota</taxon>
        <taxon>Metazoa</taxon>
        <taxon>Chordata</taxon>
        <taxon>Craniata</taxon>
        <taxon>Vertebrata</taxon>
        <taxon>Euteleostomi</taxon>
        <taxon>Mammalia</taxon>
        <taxon>Eutheria</taxon>
        <taxon>Euarchontoglires</taxon>
        <taxon>Glires</taxon>
        <taxon>Rodentia</taxon>
        <taxon>Myomorpha</taxon>
        <taxon>Muroidea</taxon>
        <taxon>Muridae</taxon>
        <taxon>Murinae</taxon>
        <taxon>Mus</taxon>
        <taxon>Mus</taxon>
    </lineage>
</organism>
<comment type="function">
    <text evidence="1 2">Core component of the TRAPP complexes which has a function of guanine nucleotide exchange factor activity for Rab1 GTPase. Plays a role in vesicular transport from endoplasmic reticulum to Golgi and autophagy (By similarity). May play a role in dendrite postsynaptic membrane trafficking (PubMed:11018053).</text>
</comment>
<comment type="subunit">
    <text evidence="1 2">Component of the multisubunit TRAPP (transport protein particle) complex, which includes at least TRAPPC2, TRAPPC2L, TRAPPC3, TRAPPC3L, TRAPPC4, TRAPPC5, TRAPPC8, TRAPPC9, TRAPPC10, TRAPPC11 and TRAPPC12 (By similarity). Interacts with SDC2 (PubMed:11018053).</text>
</comment>
<comment type="subcellular location">
    <subcellularLocation>
        <location evidence="2">Postsynaptic cell membrane</location>
    </subcellularLocation>
    <subcellularLocation>
        <location evidence="2">Golgi apparatus membrane</location>
    </subcellularLocation>
    <subcellularLocation>
        <location evidence="4">Endoplasmic reticulum</location>
    </subcellularLocation>
    <subcellularLocation>
        <location evidence="2">Vesicle</location>
    </subcellularLocation>
    <text evidence="2">Associated with postsynaptic membranes and in intracellular cisterns and vesicles (Golgi).</text>
</comment>
<comment type="tissue specificity">
    <text>Widely expressed.</text>
</comment>
<comment type="similarity">
    <text evidence="4">Belongs to the TRAPP small subunits family. TRAPPC4 subfamily.</text>
</comment>
<dbReference type="EMBL" id="AF233340">
    <property type="protein sequence ID" value="AAG24950.1"/>
    <property type="molecule type" value="mRNA"/>
</dbReference>
<dbReference type="EMBL" id="BC038898">
    <property type="protein sequence ID" value="AAH38898.1"/>
    <property type="molecule type" value="mRNA"/>
</dbReference>
<dbReference type="EMBL" id="AK005276">
    <property type="status" value="NOT_ANNOTATED_CDS"/>
    <property type="molecule type" value="mRNA"/>
</dbReference>
<dbReference type="CCDS" id="CCDS23109.1"/>
<dbReference type="RefSeq" id="NP_068561.1">
    <property type="nucleotide sequence ID" value="NM_021789.3"/>
</dbReference>
<dbReference type="SMR" id="Q9ES56"/>
<dbReference type="BioGRID" id="208560">
    <property type="interactions" value="6"/>
</dbReference>
<dbReference type="ComplexPortal" id="CPX-4764">
    <property type="entry name" value="TRAPP II complex"/>
</dbReference>
<dbReference type="ComplexPortal" id="CPX-4766">
    <property type="entry name" value="TRAPP III complex"/>
</dbReference>
<dbReference type="FunCoup" id="Q9ES56">
    <property type="interactions" value="1523"/>
</dbReference>
<dbReference type="IntAct" id="Q9ES56">
    <property type="interactions" value="2"/>
</dbReference>
<dbReference type="MINT" id="Q9ES56"/>
<dbReference type="STRING" id="10090.ENSMUSP00000034623"/>
<dbReference type="iPTMnet" id="Q9ES56"/>
<dbReference type="PhosphoSitePlus" id="Q9ES56"/>
<dbReference type="SwissPalm" id="Q9ES56"/>
<dbReference type="PaxDb" id="10090-ENSMUSP00000034623"/>
<dbReference type="ProteomicsDB" id="258832"/>
<dbReference type="Pumba" id="Q9ES56"/>
<dbReference type="Antibodypedia" id="32564">
    <property type="antibodies" value="311 antibodies from 26 providers"/>
</dbReference>
<dbReference type="DNASU" id="60409"/>
<dbReference type="Ensembl" id="ENSMUST00000034623.8">
    <property type="protein sequence ID" value="ENSMUSP00000034623.7"/>
    <property type="gene ID" value="ENSMUSG00000032112.11"/>
</dbReference>
<dbReference type="GeneID" id="60409"/>
<dbReference type="KEGG" id="mmu:60409"/>
<dbReference type="UCSC" id="uc009pdk.1">
    <property type="organism name" value="mouse"/>
</dbReference>
<dbReference type="AGR" id="MGI:1926211"/>
<dbReference type="CTD" id="51399"/>
<dbReference type="MGI" id="MGI:1926211">
    <property type="gene designation" value="Trappc4"/>
</dbReference>
<dbReference type="VEuPathDB" id="HostDB:ENSMUSG00000032112"/>
<dbReference type="eggNOG" id="KOG3369">
    <property type="taxonomic scope" value="Eukaryota"/>
</dbReference>
<dbReference type="GeneTree" id="ENSGT00940000153761"/>
<dbReference type="HOGENOM" id="CLU_053380_1_0_1"/>
<dbReference type="InParanoid" id="Q9ES56"/>
<dbReference type="OMA" id="GQRDGIN"/>
<dbReference type="OrthoDB" id="246406at2759"/>
<dbReference type="PhylomeDB" id="Q9ES56"/>
<dbReference type="TreeFam" id="TF314561"/>
<dbReference type="Reactome" id="R-MMU-204005">
    <property type="pathway name" value="COPII-mediated vesicle transport"/>
</dbReference>
<dbReference type="Reactome" id="R-MMU-8876198">
    <property type="pathway name" value="RAB GEFs exchange GTP for GDP on RABs"/>
</dbReference>
<dbReference type="BioGRID-ORCS" id="60409">
    <property type="hits" value="24 hits in 79 CRISPR screens"/>
</dbReference>
<dbReference type="ChiTaRS" id="Trappc4">
    <property type="organism name" value="mouse"/>
</dbReference>
<dbReference type="PRO" id="PR:Q9ES56"/>
<dbReference type="Proteomes" id="UP000000589">
    <property type="component" value="Chromosome 9"/>
</dbReference>
<dbReference type="RNAct" id="Q9ES56">
    <property type="molecule type" value="protein"/>
</dbReference>
<dbReference type="Bgee" id="ENSMUSG00000032112">
    <property type="expression patterns" value="Expressed in embryonic brain and 282 other cell types or tissues"/>
</dbReference>
<dbReference type="ExpressionAtlas" id="Q9ES56">
    <property type="expression patterns" value="baseline and differential"/>
</dbReference>
<dbReference type="GO" id="GO:0005737">
    <property type="term" value="C:cytoplasm"/>
    <property type="evidence" value="ECO:0000303"/>
    <property type="project" value="ComplexPortal"/>
</dbReference>
<dbReference type="GO" id="GO:0030425">
    <property type="term" value="C:dendrite"/>
    <property type="evidence" value="ECO:0000314"/>
    <property type="project" value="UniProtKB"/>
</dbReference>
<dbReference type="GO" id="GO:0005783">
    <property type="term" value="C:endoplasmic reticulum"/>
    <property type="evidence" value="ECO:0007669"/>
    <property type="project" value="UniProtKB-SubCell"/>
</dbReference>
<dbReference type="GO" id="GO:0000139">
    <property type="term" value="C:Golgi membrane"/>
    <property type="evidence" value="ECO:0007669"/>
    <property type="project" value="UniProtKB-SubCell"/>
</dbReference>
<dbReference type="GO" id="GO:0005795">
    <property type="term" value="C:Golgi stack"/>
    <property type="evidence" value="ECO:0000314"/>
    <property type="project" value="UniProtKB"/>
</dbReference>
<dbReference type="GO" id="GO:0005886">
    <property type="term" value="C:plasma membrane"/>
    <property type="evidence" value="ECO:0000304"/>
    <property type="project" value="Reactome"/>
</dbReference>
<dbReference type="GO" id="GO:0098839">
    <property type="term" value="C:postsynaptic density membrane"/>
    <property type="evidence" value="ECO:0000314"/>
    <property type="project" value="SynGO"/>
</dbReference>
<dbReference type="GO" id="GO:0048786">
    <property type="term" value="C:presynaptic active zone"/>
    <property type="evidence" value="ECO:0000314"/>
    <property type="project" value="SynGO"/>
</dbReference>
<dbReference type="GO" id="GO:0045202">
    <property type="term" value="C:synapse"/>
    <property type="evidence" value="ECO:0000314"/>
    <property type="project" value="UniProtKB"/>
</dbReference>
<dbReference type="GO" id="GO:0008021">
    <property type="term" value="C:synaptic vesicle"/>
    <property type="evidence" value="ECO:0000314"/>
    <property type="project" value="UniProtKB"/>
</dbReference>
<dbReference type="GO" id="GO:0030008">
    <property type="term" value="C:TRAPP complex"/>
    <property type="evidence" value="ECO:0000314"/>
    <property type="project" value="MGI"/>
</dbReference>
<dbReference type="GO" id="GO:1990071">
    <property type="term" value="C:TRAPPII protein complex"/>
    <property type="evidence" value="ECO:0000303"/>
    <property type="project" value="ComplexPortal"/>
</dbReference>
<dbReference type="GO" id="GO:1990072">
    <property type="term" value="C:TRAPPIII protein complex"/>
    <property type="evidence" value="ECO:0000303"/>
    <property type="project" value="ComplexPortal"/>
</dbReference>
<dbReference type="GO" id="GO:0006914">
    <property type="term" value="P:autophagy"/>
    <property type="evidence" value="ECO:0000250"/>
    <property type="project" value="UniProtKB"/>
</dbReference>
<dbReference type="GO" id="GO:0048208">
    <property type="term" value="P:COPII vesicle coating"/>
    <property type="evidence" value="ECO:0000303"/>
    <property type="project" value="ComplexPortal"/>
</dbReference>
<dbReference type="GO" id="GO:0016358">
    <property type="term" value="P:dendrite development"/>
    <property type="evidence" value="ECO:0000314"/>
    <property type="project" value="UniProtKB"/>
</dbReference>
<dbReference type="GO" id="GO:0006888">
    <property type="term" value="P:endoplasmic reticulum to Golgi vesicle-mediated transport"/>
    <property type="evidence" value="ECO:0000250"/>
    <property type="project" value="UniProtKB"/>
</dbReference>
<dbReference type="GO" id="GO:0006901">
    <property type="term" value="P:vesicle coating"/>
    <property type="evidence" value="ECO:0000303"/>
    <property type="project" value="ComplexPortal"/>
</dbReference>
<dbReference type="GO" id="GO:0099022">
    <property type="term" value="P:vesicle tethering"/>
    <property type="evidence" value="ECO:0000303"/>
    <property type="project" value="ComplexPortal"/>
</dbReference>
<dbReference type="GO" id="GO:0016192">
    <property type="term" value="P:vesicle-mediated transport"/>
    <property type="evidence" value="ECO:0000304"/>
    <property type="project" value="UniProtKB"/>
</dbReference>
<dbReference type="CDD" id="cd14856">
    <property type="entry name" value="TRAPPC4_synbindin"/>
    <property type="match status" value="1"/>
</dbReference>
<dbReference type="FunFam" id="3.30.450.70:FF:000002">
    <property type="entry name" value="Trafficking protein particle complex subunit 4"/>
    <property type="match status" value="1"/>
</dbReference>
<dbReference type="Gene3D" id="3.30.450.70">
    <property type="match status" value="1"/>
</dbReference>
<dbReference type="InterPro" id="IPR011012">
    <property type="entry name" value="Longin-like_dom_sf"/>
</dbReference>
<dbReference type="InterPro" id="IPR007233">
    <property type="entry name" value="TRAPPC"/>
</dbReference>
<dbReference type="PANTHER" id="PTHR23249">
    <property type="entry name" value="TRAFFICKING PROTEIN PARTICLE COMPLEX SUBUNIT"/>
    <property type="match status" value="1"/>
</dbReference>
<dbReference type="PANTHER" id="PTHR23249:SF15">
    <property type="entry name" value="TRAFFICKING PROTEIN PARTICLE COMPLEX SUBUNIT 4"/>
    <property type="match status" value="1"/>
</dbReference>
<dbReference type="Pfam" id="PF04099">
    <property type="entry name" value="Sybindin"/>
    <property type="match status" value="1"/>
</dbReference>
<dbReference type="SMART" id="SM01399">
    <property type="entry name" value="Sybindin"/>
    <property type="match status" value="1"/>
</dbReference>
<dbReference type="SUPFAM" id="SSF64356">
    <property type="entry name" value="SNARE-like"/>
    <property type="match status" value="1"/>
</dbReference>
<proteinExistence type="evidence at protein level"/>
<accession>Q9ES56</accession>
<accession>Q9DB31</accession>
<evidence type="ECO:0000250" key="1">
    <source>
        <dbReference type="UniProtKB" id="Q9Y296"/>
    </source>
</evidence>
<evidence type="ECO:0000269" key="2">
    <source>
    </source>
</evidence>
<evidence type="ECO:0000303" key="3">
    <source>
    </source>
</evidence>
<evidence type="ECO:0000305" key="4"/>
<evidence type="ECO:0000312" key="5">
    <source>
        <dbReference type="MGI" id="MGI:1926211"/>
    </source>
</evidence>
<keyword id="KW-1003">Cell membrane</keyword>
<keyword id="KW-0256">Endoplasmic reticulum</keyword>
<keyword id="KW-0931">ER-Golgi transport</keyword>
<keyword id="KW-0333">Golgi apparatus</keyword>
<keyword id="KW-0472">Membrane</keyword>
<keyword id="KW-0628">Postsynaptic cell membrane</keyword>
<keyword id="KW-1185">Reference proteome</keyword>
<keyword id="KW-0770">Synapse</keyword>
<keyword id="KW-0813">Transport</keyword>
<reference key="1">
    <citation type="journal article" date="2000" name="J. Cell Biol.">
        <title>Synbindin, a novel syndecan-2-binding protein in neuronal dendritic spines.</title>
        <authorList>
            <person name="Ethell I.M."/>
            <person name="Hagihara K."/>
            <person name="Miura Y."/>
            <person name="Irie F."/>
            <person name="Yamaguchi Y."/>
        </authorList>
    </citation>
    <scope>NUCLEOTIDE SEQUENCE [MRNA]</scope>
    <scope>INTERACTION WITH SDC2</scope>
    <source>
        <tissue>Brain</tissue>
    </source>
</reference>
<reference key="2">
    <citation type="journal article" date="2004" name="Genome Res.">
        <title>The status, quality, and expansion of the NIH full-length cDNA project: the Mammalian Gene Collection (MGC).</title>
        <authorList>
            <consortium name="The MGC Project Team"/>
        </authorList>
    </citation>
    <scope>NUCLEOTIDE SEQUENCE [LARGE SCALE MRNA]</scope>
    <source>
        <tissue>Retina</tissue>
    </source>
</reference>
<reference key="3">
    <citation type="journal article" date="2005" name="Science">
        <title>The transcriptional landscape of the mammalian genome.</title>
        <authorList>
            <person name="Carninci P."/>
            <person name="Kasukawa T."/>
            <person name="Katayama S."/>
            <person name="Gough J."/>
            <person name="Frith M.C."/>
            <person name="Maeda N."/>
            <person name="Oyama R."/>
            <person name="Ravasi T."/>
            <person name="Lenhard B."/>
            <person name="Wells C."/>
            <person name="Kodzius R."/>
            <person name="Shimokawa K."/>
            <person name="Bajic V.B."/>
            <person name="Brenner S.E."/>
            <person name="Batalov S."/>
            <person name="Forrest A.R."/>
            <person name="Zavolan M."/>
            <person name="Davis M.J."/>
            <person name="Wilming L.G."/>
            <person name="Aidinis V."/>
            <person name="Allen J.E."/>
            <person name="Ambesi-Impiombato A."/>
            <person name="Apweiler R."/>
            <person name="Aturaliya R.N."/>
            <person name="Bailey T.L."/>
            <person name="Bansal M."/>
            <person name="Baxter L."/>
            <person name="Beisel K.W."/>
            <person name="Bersano T."/>
            <person name="Bono H."/>
            <person name="Chalk A.M."/>
            <person name="Chiu K.P."/>
            <person name="Choudhary V."/>
            <person name="Christoffels A."/>
            <person name="Clutterbuck D.R."/>
            <person name="Crowe M.L."/>
            <person name="Dalla E."/>
            <person name="Dalrymple B.P."/>
            <person name="de Bono B."/>
            <person name="Della Gatta G."/>
            <person name="di Bernardo D."/>
            <person name="Down T."/>
            <person name="Engstrom P."/>
            <person name="Fagiolini M."/>
            <person name="Faulkner G."/>
            <person name="Fletcher C.F."/>
            <person name="Fukushima T."/>
            <person name="Furuno M."/>
            <person name="Futaki S."/>
            <person name="Gariboldi M."/>
            <person name="Georgii-Hemming P."/>
            <person name="Gingeras T.R."/>
            <person name="Gojobori T."/>
            <person name="Green R.E."/>
            <person name="Gustincich S."/>
            <person name="Harbers M."/>
            <person name="Hayashi Y."/>
            <person name="Hensch T.K."/>
            <person name="Hirokawa N."/>
            <person name="Hill D."/>
            <person name="Huminiecki L."/>
            <person name="Iacono M."/>
            <person name="Ikeo K."/>
            <person name="Iwama A."/>
            <person name="Ishikawa T."/>
            <person name="Jakt M."/>
            <person name="Kanapin A."/>
            <person name="Katoh M."/>
            <person name="Kawasawa Y."/>
            <person name="Kelso J."/>
            <person name="Kitamura H."/>
            <person name="Kitano H."/>
            <person name="Kollias G."/>
            <person name="Krishnan S.P."/>
            <person name="Kruger A."/>
            <person name="Kummerfeld S.K."/>
            <person name="Kurochkin I.V."/>
            <person name="Lareau L.F."/>
            <person name="Lazarevic D."/>
            <person name="Lipovich L."/>
            <person name="Liu J."/>
            <person name="Liuni S."/>
            <person name="McWilliam S."/>
            <person name="Madan Babu M."/>
            <person name="Madera M."/>
            <person name="Marchionni L."/>
            <person name="Matsuda H."/>
            <person name="Matsuzawa S."/>
            <person name="Miki H."/>
            <person name="Mignone F."/>
            <person name="Miyake S."/>
            <person name="Morris K."/>
            <person name="Mottagui-Tabar S."/>
            <person name="Mulder N."/>
            <person name="Nakano N."/>
            <person name="Nakauchi H."/>
            <person name="Ng P."/>
            <person name="Nilsson R."/>
            <person name="Nishiguchi S."/>
            <person name="Nishikawa S."/>
            <person name="Nori F."/>
            <person name="Ohara O."/>
            <person name="Okazaki Y."/>
            <person name="Orlando V."/>
            <person name="Pang K.C."/>
            <person name="Pavan W.J."/>
            <person name="Pavesi G."/>
            <person name="Pesole G."/>
            <person name="Petrovsky N."/>
            <person name="Piazza S."/>
            <person name="Reed J."/>
            <person name="Reid J.F."/>
            <person name="Ring B.Z."/>
            <person name="Ringwald M."/>
            <person name="Rost B."/>
            <person name="Ruan Y."/>
            <person name="Salzberg S.L."/>
            <person name="Sandelin A."/>
            <person name="Schneider C."/>
            <person name="Schoenbach C."/>
            <person name="Sekiguchi K."/>
            <person name="Semple C.A."/>
            <person name="Seno S."/>
            <person name="Sessa L."/>
            <person name="Sheng Y."/>
            <person name="Shibata Y."/>
            <person name="Shimada H."/>
            <person name="Shimada K."/>
            <person name="Silva D."/>
            <person name="Sinclair B."/>
            <person name="Sperling S."/>
            <person name="Stupka E."/>
            <person name="Sugiura K."/>
            <person name="Sultana R."/>
            <person name="Takenaka Y."/>
            <person name="Taki K."/>
            <person name="Tammoja K."/>
            <person name="Tan S.L."/>
            <person name="Tang S."/>
            <person name="Taylor M.S."/>
            <person name="Tegner J."/>
            <person name="Teichmann S.A."/>
            <person name="Ueda H.R."/>
            <person name="van Nimwegen E."/>
            <person name="Verardo R."/>
            <person name="Wei C.L."/>
            <person name="Yagi K."/>
            <person name="Yamanishi H."/>
            <person name="Zabarovsky E."/>
            <person name="Zhu S."/>
            <person name="Zimmer A."/>
            <person name="Hide W."/>
            <person name="Bult C."/>
            <person name="Grimmond S.M."/>
            <person name="Teasdale R.D."/>
            <person name="Liu E.T."/>
            <person name="Brusic V."/>
            <person name="Quackenbush J."/>
            <person name="Wahlestedt C."/>
            <person name="Mattick J.S."/>
            <person name="Hume D.A."/>
            <person name="Kai C."/>
            <person name="Sasaki D."/>
            <person name="Tomaru Y."/>
            <person name="Fukuda S."/>
            <person name="Kanamori-Katayama M."/>
            <person name="Suzuki M."/>
            <person name="Aoki J."/>
            <person name="Arakawa T."/>
            <person name="Iida J."/>
            <person name="Imamura K."/>
            <person name="Itoh M."/>
            <person name="Kato T."/>
            <person name="Kawaji H."/>
            <person name="Kawagashira N."/>
            <person name="Kawashima T."/>
            <person name="Kojima M."/>
            <person name="Kondo S."/>
            <person name="Konno H."/>
            <person name="Nakano K."/>
            <person name="Ninomiya N."/>
            <person name="Nishio T."/>
            <person name="Okada M."/>
            <person name="Plessy C."/>
            <person name="Shibata K."/>
            <person name="Shiraki T."/>
            <person name="Suzuki S."/>
            <person name="Tagami M."/>
            <person name="Waki K."/>
            <person name="Watahiki A."/>
            <person name="Okamura-Oho Y."/>
            <person name="Suzuki H."/>
            <person name="Kawai J."/>
            <person name="Hayashizaki Y."/>
        </authorList>
    </citation>
    <scope>NUCLEOTIDE SEQUENCE [LARGE SCALE MRNA] OF 1-194</scope>
    <source>
        <strain>C57BL/6J</strain>
        <tissue>Cerebellum</tissue>
    </source>
</reference>
<reference key="4">
    <citation type="journal article" date="2010" name="Cell">
        <title>A tissue-specific atlas of mouse protein phosphorylation and expression.</title>
        <authorList>
            <person name="Huttlin E.L."/>
            <person name="Jedrychowski M.P."/>
            <person name="Elias J.E."/>
            <person name="Goswami T."/>
            <person name="Rad R."/>
            <person name="Beausoleil S.A."/>
            <person name="Villen J."/>
            <person name="Haas W."/>
            <person name="Sowa M.E."/>
            <person name="Gygi S.P."/>
        </authorList>
    </citation>
    <scope>IDENTIFICATION BY MASS SPECTROMETRY [LARGE SCALE ANALYSIS]</scope>
    <source>
        <tissue>Brain</tissue>
        <tissue>Brown adipose tissue</tissue>
        <tissue>Kidney</tissue>
        <tissue>Liver</tissue>
        <tissue>Lung</tissue>
        <tissue>Pancreas</tissue>
        <tissue>Spleen</tissue>
        <tissue>Testis</tissue>
    </source>
</reference>
<name>TPPC4_MOUSE</name>
<gene>
    <name evidence="5" type="primary">Trappc4</name>
    <name evidence="3" type="synonym">Sbdn</name>
</gene>